<protein>
    <recommendedName>
        <fullName>Cytochrome b translational activator protein CBS1, mitochondrial</fullName>
    </recommendedName>
    <alternativeName>
        <fullName>COB-specific translational activator protein CBS1</fullName>
    </alternativeName>
</protein>
<evidence type="ECO:0000269" key="1">
    <source>
    </source>
</evidence>
<evidence type="ECO:0000269" key="2">
    <source>
    </source>
</evidence>
<evidence type="ECO:0000269" key="3">
    <source>
    </source>
</evidence>
<evidence type="ECO:0000269" key="4">
    <source>
    </source>
</evidence>
<evidence type="ECO:0000269" key="5">
    <source>
    </source>
</evidence>
<evidence type="ECO:0000305" key="6"/>
<accession>P14066</accession>
<accession>D6VRS9</accession>
<feature type="transit peptide" description="Mitochondrion" evidence="4">
    <location>
        <begin position="1"/>
        <end position="25"/>
    </location>
</feature>
<feature type="chain" id="PRO_0000020850" description="Cytochrome b translational activator protein CBS1, mitochondrial">
    <location>
        <begin position="26"/>
        <end position="229"/>
    </location>
</feature>
<feature type="mutagenesis site" description="Loss of function, causes respiratory deficiency." evidence="1">
    <original>K</original>
    <variation>R</variation>
    <location>
        <position position="98"/>
    </location>
</feature>
<feature type="mutagenesis site" description="In CBS1-1, which is respiratory deficient." evidence="1">
    <original>G</original>
    <variation>A</variation>
    <location>
        <position position="100"/>
    </location>
</feature>
<feature type="mutagenesis site" description="Loss of function, causes respiratory deficiency." evidence="1">
    <original>I</original>
    <variation>T</variation>
    <location>
        <position position="124"/>
    </location>
</feature>
<feature type="mutagenesis site" description="Loss of function, causes respiratory deficiency." evidence="1">
    <original>F</original>
    <variation>S</variation>
    <variation>T</variation>
    <location>
        <position position="129"/>
    </location>
</feature>
<gene>
    <name type="primary">CBS1</name>
    <name type="ordered locus">YDL069C</name>
</gene>
<dbReference type="EMBL" id="X15650">
    <property type="protein sequence ID" value="CAA33676.1"/>
    <property type="status" value="ALT_INIT"/>
    <property type="molecule type" value="Genomic_DNA"/>
</dbReference>
<dbReference type="EMBL" id="Z74117">
    <property type="protein sequence ID" value="CAA98633.1"/>
    <property type="status" value="ALT_INIT"/>
    <property type="molecule type" value="Genomic_DNA"/>
</dbReference>
<dbReference type="EMBL" id="X16120">
    <property type="protein sequence ID" value="CAA34251.1"/>
    <property type="status" value="ALT_INIT"/>
    <property type="molecule type" value="Genomic_DNA"/>
</dbReference>
<dbReference type="EMBL" id="BK006938">
    <property type="protein sequence ID" value="DAA11789.1"/>
    <property type="molecule type" value="Genomic_DNA"/>
</dbReference>
<dbReference type="PIR" id="JQ0296">
    <property type="entry name" value="JQ0296"/>
</dbReference>
<dbReference type="RefSeq" id="NP_010214.2">
    <property type="nucleotide sequence ID" value="NM_001180128.1"/>
</dbReference>
<dbReference type="BioGRID" id="31991">
    <property type="interactions" value="130"/>
</dbReference>
<dbReference type="FunCoup" id="P14066">
    <property type="interactions" value="69"/>
</dbReference>
<dbReference type="IntAct" id="P14066">
    <property type="interactions" value="3"/>
</dbReference>
<dbReference type="MINT" id="P14066"/>
<dbReference type="STRING" id="4932.YDL069C"/>
<dbReference type="PaxDb" id="4932-YDL069C"/>
<dbReference type="PeptideAtlas" id="P14066"/>
<dbReference type="EnsemblFungi" id="YDL069C_mRNA">
    <property type="protein sequence ID" value="YDL069C"/>
    <property type="gene ID" value="YDL069C"/>
</dbReference>
<dbReference type="GeneID" id="851491"/>
<dbReference type="KEGG" id="sce:YDL069C"/>
<dbReference type="AGR" id="SGD:S000002227"/>
<dbReference type="SGD" id="S000002227">
    <property type="gene designation" value="CBS1"/>
</dbReference>
<dbReference type="VEuPathDB" id="FungiDB:YDL069C"/>
<dbReference type="HOGENOM" id="CLU_105542_0_0_1"/>
<dbReference type="InParanoid" id="P14066"/>
<dbReference type="OrthoDB" id="4051871at2759"/>
<dbReference type="BioCyc" id="YEAST:G3O-29481-MONOMER"/>
<dbReference type="BioGRID-ORCS" id="851491">
    <property type="hits" value="1 hit in 10 CRISPR screens"/>
</dbReference>
<dbReference type="PRO" id="PR:P14066"/>
<dbReference type="Proteomes" id="UP000002311">
    <property type="component" value="Chromosome IV"/>
</dbReference>
<dbReference type="RNAct" id="P14066">
    <property type="molecule type" value="protein"/>
</dbReference>
<dbReference type="GO" id="GO:0005743">
    <property type="term" value="C:mitochondrial inner membrane"/>
    <property type="evidence" value="ECO:0000314"/>
    <property type="project" value="GO_Central"/>
</dbReference>
<dbReference type="GO" id="GO:0005761">
    <property type="term" value="C:mitochondrial ribosome"/>
    <property type="evidence" value="ECO:0000353"/>
    <property type="project" value="SGD"/>
</dbReference>
<dbReference type="GO" id="GO:0005739">
    <property type="term" value="C:mitochondrion"/>
    <property type="evidence" value="ECO:0007005"/>
    <property type="project" value="SGD"/>
</dbReference>
<dbReference type="GO" id="GO:0045182">
    <property type="term" value="F:translation regulator activity"/>
    <property type="evidence" value="ECO:0000315"/>
    <property type="project" value="SGD"/>
</dbReference>
<dbReference type="GO" id="GO:0034551">
    <property type="term" value="P:mitochondrial respiratory chain complex III assembly"/>
    <property type="evidence" value="ECO:0000315"/>
    <property type="project" value="SGD"/>
</dbReference>
<dbReference type="GO" id="GO:0070131">
    <property type="term" value="P:positive regulation of mitochondrial translation"/>
    <property type="evidence" value="ECO:0000315"/>
    <property type="project" value="SGD"/>
</dbReference>
<name>CBS1_YEAST</name>
<sequence>MLRTKVFATTVARISGIRRYIPIRTINTVTKKNISKIEKLCEVLEVNPDGYKGKERIPTKELTKLLYTTSRNMLVRVPMTGDLSTGNTFETRNETLQKLGEQLIHLEINKMLTITFTNFNQFNIMNKNFNYIHNLDRARVVNMDSISWLIKNSLKINQLAHLRIPANLPKEMGLTSSSNDFQNLNDWKVILSFIGYLKLLEIKNDNKKFIESIIKTICIPLINYHLRKS</sequence>
<keyword id="KW-0010">Activator</keyword>
<keyword id="KW-0903">Direct protein sequencing</keyword>
<keyword id="KW-0472">Membrane</keyword>
<keyword id="KW-0496">Mitochondrion</keyword>
<keyword id="KW-0999">Mitochondrion inner membrane</keyword>
<keyword id="KW-1185">Reference proteome</keyword>
<keyword id="KW-0809">Transit peptide</keyword>
<keyword id="KW-0810">Translation regulation</keyword>
<proteinExistence type="evidence at protein level"/>
<comment type="function">
    <text>mRNA-specific translational activator of cytochrome b. The cytochrome b (COB) leader RNA may represent the target sequence for CBS1 and CBS2, tethering the COB mRNA to the inner mitochondrial membrane, where cotranslational insertion of cytochrome b into the membrane can occur.</text>
</comment>
<comment type="subcellular location">
    <subcellularLocation>
        <location evidence="3 5">Mitochondrion inner membrane</location>
        <topology evidence="3 5">Peripheral membrane protein</topology>
    </subcellularLocation>
</comment>
<comment type="miscellaneous">
    <text evidence="2">Present with 556 molecules/cell in log phase SD medium.</text>
</comment>
<comment type="miscellaneous">
    <text>CBS1 protein devoid of mitochondrial targeting sequences can enter mitochondria in vivo, possibly due to a bypass of the mitochondrial import system.</text>
</comment>
<comment type="miscellaneous">
    <text>The in vitro imported CBS1 protein is functional and soluble indicating that the N-terminal part of CBS1 confers some binding to mitochondrial membranes.</text>
</comment>
<comment type="sequence caution" evidence="6">
    <conflict type="erroneous initiation">
        <sequence resource="EMBL-CDS" id="CAA33676"/>
    </conflict>
</comment>
<comment type="sequence caution" evidence="6">
    <conflict type="erroneous initiation">
        <sequence resource="EMBL-CDS" id="CAA34251"/>
    </conflict>
</comment>
<comment type="sequence caution" evidence="6">
    <conflict type="erroneous initiation">
        <sequence resource="EMBL-CDS" id="CAA98633"/>
    </conflict>
</comment>
<organism>
    <name type="scientific">Saccharomyces cerevisiae (strain ATCC 204508 / S288c)</name>
    <name type="common">Baker's yeast</name>
    <dbReference type="NCBI Taxonomy" id="559292"/>
    <lineage>
        <taxon>Eukaryota</taxon>
        <taxon>Fungi</taxon>
        <taxon>Dikarya</taxon>
        <taxon>Ascomycota</taxon>
        <taxon>Saccharomycotina</taxon>
        <taxon>Saccharomycetes</taxon>
        <taxon>Saccharomycetales</taxon>
        <taxon>Saccharomycetaceae</taxon>
        <taxon>Saccharomyces</taxon>
    </lineage>
</organism>
<reference key="1">
    <citation type="journal article" date="1989" name="Mol. Gen. Genet.">
        <title>In vitro and in vivo studies on the mitochondrial import of CBS1, a translational activator of cytochrome b in yeast.</title>
        <authorList>
            <person name="Koerte A."/>
            <person name="Forsbach V."/>
            <person name="Gottenoef T."/>
            <person name="Roedel G."/>
        </authorList>
    </citation>
    <scope>NUCLEOTIDE SEQUENCE [GENOMIC DNA]</scope>
</reference>
<reference key="2">
    <citation type="journal article" date="1997" name="Nature">
        <title>The nucleotide sequence of Saccharomyces cerevisiae chromosome IV.</title>
        <authorList>
            <person name="Jacq C."/>
            <person name="Alt-Moerbe J."/>
            <person name="Andre B."/>
            <person name="Arnold W."/>
            <person name="Bahr A."/>
            <person name="Ballesta J.P.G."/>
            <person name="Bargues M."/>
            <person name="Baron L."/>
            <person name="Becker A."/>
            <person name="Biteau N."/>
            <person name="Bloecker H."/>
            <person name="Blugeon C."/>
            <person name="Boskovic J."/>
            <person name="Brandt P."/>
            <person name="Brueckner M."/>
            <person name="Buitrago M.J."/>
            <person name="Coster F."/>
            <person name="Delaveau T."/>
            <person name="del Rey F."/>
            <person name="Dujon B."/>
            <person name="Eide L.G."/>
            <person name="Garcia-Cantalejo J.M."/>
            <person name="Goffeau A."/>
            <person name="Gomez-Peris A."/>
            <person name="Granotier C."/>
            <person name="Hanemann V."/>
            <person name="Hankeln T."/>
            <person name="Hoheisel J.D."/>
            <person name="Jaeger W."/>
            <person name="Jimenez A."/>
            <person name="Jonniaux J.-L."/>
            <person name="Kraemer C."/>
            <person name="Kuester H."/>
            <person name="Laamanen P."/>
            <person name="Legros Y."/>
            <person name="Louis E.J."/>
            <person name="Moeller-Rieker S."/>
            <person name="Monnet A."/>
            <person name="Moro M."/>
            <person name="Mueller-Auer S."/>
            <person name="Nussbaumer B."/>
            <person name="Paricio N."/>
            <person name="Paulin L."/>
            <person name="Perea J."/>
            <person name="Perez-Alonso M."/>
            <person name="Perez-Ortin J.E."/>
            <person name="Pohl T.M."/>
            <person name="Prydz H."/>
            <person name="Purnelle B."/>
            <person name="Rasmussen S.W."/>
            <person name="Remacha M.A."/>
            <person name="Revuelta J.L."/>
            <person name="Rieger M."/>
            <person name="Salom D."/>
            <person name="Saluz H.P."/>
            <person name="Saiz J.E."/>
            <person name="Saren A.-M."/>
            <person name="Schaefer M."/>
            <person name="Scharfe M."/>
            <person name="Schmidt E.R."/>
            <person name="Schneider C."/>
            <person name="Scholler P."/>
            <person name="Schwarz S."/>
            <person name="Soler-Mira A."/>
            <person name="Urrestarazu L.A."/>
            <person name="Verhasselt P."/>
            <person name="Vissers S."/>
            <person name="Voet M."/>
            <person name="Volckaert G."/>
            <person name="Wagner G."/>
            <person name="Wambutt R."/>
            <person name="Wedler E."/>
            <person name="Wedler H."/>
            <person name="Woelfl S."/>
            <person name="Harris D.E."/>
            <person name="Bowman S."/>
            <person name="Brown D."/>
            <person name="Churcher C.M."/>
            <person name="Connor R."/>
            <person name="Dedman K."/>
            <person name="Gentles S."/>
            <person name="Hamlin N."/>
            <person name="Hunt S."/>
            <person name="Jones L."/>
            <person name="McDonald S."/>
            <person name="Murphy L.D."/>
            <person name="Niblett D."/>
            <person name="Odell C."/>
            <person name="Oliver K."/>
            <person name="Rajandream M.A."/>
            <person name="Richards C."/>
            <person name="Shore L."/>
            <person name="Walsh S.V."/>
            <person name="Barrell B.G."/>
            <person name="Dietrich F.S."/>
            <person name="Mulligan J.T."/>
            <person name="Allen E."/>
            <person name="Araujo R."/>
            <person name="Aviles E."/>
            <person name="Berno A."/>
            <person name="Carpenter J."/>
            <person name="Chen E."/>
            <person name="Cherry J.M."/>
            <person name="Chung E."/>
            <person name="Duncan M."/>
            <person name="Hunicke-Smith S."/>
            <person name="Hyman R.W."/>
            <person name="Komp C."/>
            <person name="Lashkari D."/>
            <person name="Lew H."/>
            <person name="Lin D."/>
            <person name="Mosedale D."/>
            <person name="Nakahara K."/>
            <person name="Namath A."/>
            <person name="Oefner P."/>
            <person name="Oh C."/>
            <person name="Petel F.X."/>
            <person name="Roberts D."/>
            <person name="Schramm S."/>
            <person name="Schroeder M."/>
            <person name="Shogren T."/>
            <person name="Shroff N."/>
            <person name="Winant A."/>
            <person name="Yelton M.A."/>
            <person name="Botstein D."/>
            <person name="Davis R.W."/>
            <person name="Johnston M."/>
            <person name="Andrews S."/>
            <person name="Brinkman R."/>
            <person name="Cooper J."/>
            <person name="Ding H."/>
            <person name="Du Z."/>
            <person name="Favello A."/>
            <person name="Fulton L."/>
            <person name="Gattung S."/>
            <person name="Greco T."/>
            <person name="Hallsworth K."/>
            <person name="Hawkins J."/>
            <person name="Hillier L.W."/>
            <person name="Jier M."/>
            <person name="Johnson D."/>
            <person name="Johnston L."/>
            <person name="Kirsten J."/>
            <person name="Kucaba T."/>
            <person name="Langston Y."/>
            <person name="Latreille P."/>
            <person name="Le T."/>
            <person name="Mardis E."/>
            <person name="Menezes S."/>
            <person name="Miller N."/>
            <person name="Nhan M."/>
            <person name="Pauley A."/>
            <person name="Peluso D."/>
            <person name="Rifkin L."/>
            <person name="Riles L."/>
            <person name="Taich A."/>
            <person name="Trevaskis E."/>
            <person name="Vignati D."/>
            <person name="Wilcox L."/>
            <person name="Wohldman P."/>
            <person name="Vaudin M."/>
            <person name="Wilson R."/>
            <person name="Waterston R."/>
            <person name="Albermann K."/>
            <person name="Hani J."/>
            <person name="Heumann K."/>
            <person name="Kleine K."/>
            <person name="Mewes H.-W."/>
            <person name="Zollner A."/>
            <person name="Zaccaria P."/>
        </authorList>
    </citation>
    <scope>NUCLEOTIDE SEQUENCE [LARGE SCALE GENOMIC DNA]</scope>
    <source>
        <strain>ATCC 204508 / S288c</strain>
    </source>
</reference>
<reference key="3">
    <citation type="journal article" date="2014" name="G3 (Bethesda)">
        <title>The reference genome sequence of Saccharomyces cerevisiae: Then and now.</title>
        <authorList>
            <person name="Engel S.R."/>
            <person name="Dietrich F.S."/>
            <person name="Fisk D.G."/>
            <person name="Binkley G."/>
            <person name="Balakrishnan R."/>
            <person name="Costanzo M.C."/>
            <person name="Dwight S.S."/>
            <person name="Hitz B.C."/>
            <person name="Karra K."/>
            <person name="Nash R.S."/>
            <person name="Weng S."/>
            <person name="Wong E.D."/>
            <person name="Lloyd P."/>
            <person name="Skrzypek M.S."/>
            <person name="Miyasato S.R."/>
            <person name="Simison M."/>
            <person name="Cherry J.M."/>
        </authorList>
    </citation>
    <scope>GENOME REANNOTATION</scope>
    <source>
        <strain>ATCC 204508 / S288c</strain>
    </source>
</reference>
<reference key="4">
    <citation type="journal article" date="1989" name="Mol. Gen. Genet.">
        <title>Chromosomal localization and expression of CBS1, a translational activator of cytochrome b in yeast.</title>
        <authorList>
            <person name="Forsbach V."/>
            <person name="Pillar T."/>
            <person name="Gottenoef T."/>
            <person name="Roedel G."/>
        </authorList>
    </citation>
    <scope>NUCLEOTIDE SEQUENCE [GENOMIC DNA] OF 1-8</scope>
</reference>
<reference key="5">
    <citation type="journal article" date="1991" name="Curr. Genet.">
        <title>Over-expression, purification and determination of the proteolytic processing site of the yeast mitochondrial CBS1 protein.</title>
        <authorList>
            <person name="Koerte A."/>
            <person name="Michaelis U."/>
            <person name="Lottspeich F."/>
            <person name="Roedel G."/>
        </authorList>
    </citation>
    <scope>PROTEIN SEQUENCE OF 26-29</scope>
    <scope>PROTEOLYTIC PROCESSING</scope>
</reference>
<reference key="6">
    <citation type="journal article" date="1991" name="Mol. Gen. Genet.">
        <title>Association of cytochrome b translational activator proteins with the mitochondrial membrane: implications for cytochrome b expression in yeast.</title>
        <authorList>
            <person name="Michaelis U."/>
            <person name="Korte A."/>
            <person name="Rodel G."/>
        </authorList>
    </citation>
    <scope>SUBCELLULAR LOCATION</scope>
</reference>
<reference key="7">
    <citation type="journal article" date="2000" name="Yeast">
        <title>Identification of functionally important regions of the Saccharomyces cerevisiae mitochondrial translational activator Cbs1p.</title>
        <authorList>
            <person name="Krause-Buchholz U."/>
            <person name="Tzschoppe K."/>
            <person name="Paret C."/>
            <person name="Ostermann K."/>
            <person name="Roedel G."/>
        </authorList>
    </citation>
    <scope>MUTAGENESIS OF LYS-98; GLY-100; ILE-124 AND PHE-129</scope>
</reference>
<reference key="8">
    <citation type="journal article" date="2003" name="Nature">
        <title>Sequencing and comparison of yeast species to identify genes and regulatory elements.</title>
        <authorList>
            <person name="Kellis M."/>
            <person name="Patterson N."/>
            <person name="Endrizzi M."/>
            <person name="Birren B.W."/>
            <person name="Lander E.S."/>
        </authorList>
    </citation>
    <scope>IDENTIFICATION OF PROBABLE INITIATION SITE</scope>
</reference>
<reference key="9">
    <citation type="journal article" date="2003" name="Nature">
        <title>Global analysis of protein expression in yeast.</title>
        <authorList>
            <person name="Ghaemmaghami S."/>
            <person name="Huh W.-K."/>
            <person name="Bower K."/>
            <person name="Howson R.W."/>
            <person name="Belle A."/>
            <person name="Dephoure N."/>
            <person name="O'Shea E.K."/>
            <person name="Weissman J.S."/>
        </authorList>
    </citation>
    <scope>LEVEL OF PROTEIN EXPRESSION [LARGE SCALE ANALYSIS]</scope>
</reference>
<reference key="10">
    <citation type="journal article" date="2003" name="Proc. Natl. Acad. Sci. U.S.A.">
        <title>The proteome of Saccharomyces cerevisiae mitochondria.</title>
        <authorList>
            <person name="Sickmann A."/>
            <person name="Reinders J."/>
            <person name="Wagner Y."/>
            <person name="Joppich C."/>
            <person name="Zahedi R.P."/>
            <person name="Meyer H.E."/>
            <person name="Schoenfisch B."/>
            <person name="Perschil I."/>
            <person name="Chacinska A."/>
            <person name="Guiard B."/>
            <person name="Rehling P."/>
            <person name="Pfanner N."/>
            <person name="Meisinger C."/>
        </authorList>
    </citation>
    <scope>SUBCELLULAR LOCATION [LARGE SCALE ANALYSIS]</scope>
    <source>
        <strain>ATCC 76625 / YPH499</strain>
    </source>
</reference>